<accession>Q0HSX8</accession>
<organism>
    <name type="scientific">Shewanella sp. (strain MR-7)</name>
    <dbReference type="NCBI Taxonomy" id="60481"/>
    <lineage>
        <taxon>Bacteria</taxon>
        <taxon>Pseudomonadati</taxon>
        <taxon>Pseudomonadota</taxon>
        <taxon>Gammaproteobacteria</taxon>
        <taxon>Alteromonadales</taxon>
        <taxon>Shewanellaceae</taxon>
        <taxon>Shewanella</taxon>
    </lineage>
</organism>
<proteinExistence type="inferred from homology"/>
<keyword id="KW-0963">Cytoplasm</keyword>
<keyword id="KW-0489">Methyltransferase</keyword>
<keyword id="KW-0698">rRNA processing</keyword>
<keyword id="KW-0949">S-adenosyl-L-methionine</keyword>
<keyword id="KW-0808">Transferase</keyword>
<protein>
    <recommendedName>
        <fullName evidence="1">Ribosomal RNA large subunit methyltransferase M</fullName>
        <ecNumber evidence="1">2.1.1.186</ecNumber>
    </recommendedName>
    <alternativeName>
        <fullName evidence="1">23S rRNA (cytidine2498-2'-O)-methyltransferase</fullName>
    </alternativeName>
    <alternativeName>
        <fullName evidence="1">23S rRNA 2'-O-ribose methyltransferase RlmM</fullName>
    </alternativeName>
</protein>
<evidence type="ECO:0000255" key="1">
    <source>
        <dbReference type="HAMAP-Rule" id="MF_01551"/>
    </source>
</evidence>
<gene>
    <name evidence="1" type="primary">rlmM</name>
    <name type="ordered locus">Shewmr7_2792</name>
</gene>
<reference key="1">
    <citation type="submission" date="2006-08" db="EMBL/GenBank/DDBJ databases">
        <title>Complete sequence of chromosome 1 of Shewanella sp. MR-7.</title>
        <authorList>
            <person name="Copeland A."/>
            <person name="Lucas S."/>
            <person name="Lapidus A."/>
            <person name="Barry K."/>
            <person name="Detter J.C."/>
            <person name="Glavina del Rio T."/>
            <person name="Hammon N."/>
            <person name="Israni S."/>
            <person name="Dalin E."/>
            <person name="Tice H."/>
            <person name="Pitluck S."/>
            <person name="Kiss H."/>
            <person name="Brettin T."/>
            <person name="Bruce D."/>
            <person name="Han C."/>
            <person name="Tapia R."/>
            <person name="Gilna P."/>
            <person name="Schmutz J."/>
            <person name="Larimer F."/>
            <person name="Land M."/>
            <person name="Hauser L."/>
            <person name="Kyrpides N."/>
            <person name="Mikhailova N."/>
            <person name="Nealson K."/>
            <person name="Konstantinidis K."/>
            <person name="Klappenbach J."/>
            <person name="Tiedje J."/>
            <person name="Richardson P."/>
        </authorList>
    </citation>
    <scope>NUCLEOTIDE SEQUENCE [LARGE SCALE GENOMIC DNA]</scope>
    <source>
        <strain>MR-7</strain>
    </source>
</reference>
<feature type="chain" id="PRO_0000314542" description="Ribosomal RNA large subunit methyltransferase M">
    <location>
        <begin position="1"/>
        <end position="361"/>
    </location>
</feature>
<feature type="active site" description="Proton acceptor" evidence="1">
    <location>
        <position position="305"/>
    </location>
</feature>
<feature type="binding site" evidence="1">
    <location>
        <position position="187"/>
    </location>
    <ligand>
        <name>S-adenosyl-L-methionine</name>
        <dbReference type="ChEBI" id="CHEBI:59789"/>
    </ligand>
</feature>
<feature type="binding site" evidence="1">
    <location>
        <begin position="220"/>
        <end position="223"/>
    </location>
    <ligand>
        <name>S-adenosyl-L-methionine</name>
        <dbReference type="ChEBI" id="CHEBI:59789"/>
    </ligand>
</feature>
<feature type="binding site" evidence="1">
    <location>
        <position position="239"/>
    </location>
    <ligand>
        <name>S-adenosyl-L-methionine</name>
        <dbReference type="ChEBI" id="CHEBI:59789"/>
    </ligand>
</feature>
<feature type="binding site" evidence="1">
    <location>
        <position position="259"/>
    </location>
    <ligand>
        <name>S-adenosyl-L-methionine</name>
        <dbReference type="ChEBI" id="CHEBI:59789"/>
    </ligand>
</feature>
<feature type="binding site" evidence="1">
    <location>
        <position position="276"/>
    </location>
    <ligand>
        <name>S-adenosyl-L-methionine</name>
        <dbReference type="ChEBI" id="CHEBI:59789"/>
    </ligand>
</feature>
<sequence length="361" mass="41014">MKNLFLFCRAGYEKECAAEIQQRAAELNVGGFVKANNNDAYVVYQCFEEDGGDILVKQLPLDSLIFARQMFAASELLADLPESDRVSPIVAALSDVSKAGELRVETPDTNEAKELSAFCRKFTVPLRQHLKKSGSLLAQENPKRPIIHVCFIGPGRAYVGYSFSNNSSPYFMGIPRLKMAADAPSRSSLKLDEAFAQFVPKEEQEERVRSGMNAVDLGACPGGWTYQLVRRGMMVSAVDNGPMNEKLMETGQVKHFREDGFRFEPQRKNIYWLVCDMVEKPARVAELIEAWAINGWFKEAIFNLKLPMKSRYKEVMAILNTMQEILKENGINEFQLQCKHLYHDRDEVTVHLWIRPSQAWN</sequence>
<comment type="function">
    <text evidence="1">Catalyzes the 2'-O-methylation at nucleotide C2498 in 23S rRNA.</text>
</comment>
<comment type="catalytic activity">
    <reaction evidence="1">
        <text>cytidine(2498) in 23S rRNA + S-adenosyl-L-methionine = 2'-O-methylcytidine(2498) in 23S rRNA + S-adenosyl-L-homocysteine + H(+)</text>
        <dbReference type="Rhea" id="RHEA:42788"/>
        <dbReference type="Rhea" id="RHEA-COMP:10244"/>
        <dbReference type="Rhea" id="RHEA-COMP:10245"/>
        <dbReference type="ChEBI" id="CHEBI:15378"/>
        <dbReference type="ChEBI" id="CHEBI:57856"/>
        <dbReference type="ChEBI" id="CHEBI:59789"/>
        <dbReference type="ChEBI" id="CHEBI:74495"/>
        <dbReference type="ChEBI" id="CHEBI:82748"/>
        <dbReference type="EC" id="2.1.1.186"/>
    </reaction>
</comment>
<comment type="subunit">
    <text evidence="1">Monomer.</text>
</comment>
<comment type="subcellular location">
    <subcellularLocation>
        <location evidence="1">Cytoplasm</location>
    </subcellularLocation>
</comment>
<comment type="similarity">
    <text evidence="1">Belongs to the class I-like SAM-binding methyltransferase superfamily. RNA methyltransferase RlmE family. RlmM subfamily.</text>
</comment>
<name>RLMM_SHESR</name>
<dbReference type="EC" id="2.1.1.186" evidence="1"/>
<dbReference type="EMBL" id="CP000444">
    <property type="protein sequence ID" value="ABI43777.1"/>
    <property type="molecule type" value="Genomic_DNA"/>
</dbReference>
<dbReference type="SMR" id="Q0HSX8"/>
<dbReference type="KEGG" id="shm:Shewmr7_2792"/>
<dbReference type="HOGENOM" id="CLU_043780_0_0_6"/>
<dbReference type="GO" id="GO:0005737">
    <property type="term" value="C:cytoplasm"/>
    <property type="evidence" value="ECO:0007669"/>
    <property type="project" value="UniProtKB-SubCell"/>
</dbReference>
<dbReference type="GO" id="GO:0008757">
    <property type="term" value="F:S-adenosylmethionine-dependent methyltransferase activity"/>
    <property type="evidence" value="ECO:0007669"/>
    <property type="project" value="UniProtKB-UniRule"/>
</dbReference>
<dbReference type="GO" id="GO:0032259">
    <property type="term" value="P:methylation"/>
    <property type="evidence" value="ECO:0007669"/>
    <property type="project" value="UniProtKB-KW"/>
</dbReference>
<dbReference type="GO" id="GO:0006364">
    <property type="term" value="P:rRNA processing"/>
    <property type="evidence" value="ECO:0007669"/>
    <property type="project" value="UniProtKB-UniRule"/>
</dbReference>
<dbReference type="Gene3D" id="3.30.2300.20">
    <property type="match status" value="1"/>
</dbReference>
<dbReference type="Gene3D" id="3.30.70.2810">
    <property type="match status" value="1"/>
</dbReference>
<dbReference type="Gene3D" id="3.40.50.150">
    <property type="entry name" value="Vaccinia Virus protein VP39"/>
    <property type="match status" value="1"/>
</dbReference>
<dbReference type="HAMAP" id="MF_01551">
    <property type="entry name" value="23SrRNA_methyltr_M"/>
    <property type="match status" value="1"/>
</dbReference>
<dbReference type="InterPro" id="IPR040739">
    <property type="entry name" value="RlmM_FDX"/>
</dbReference>
<dbReference type="InterPro" id="IPR048646">
    <property type="entry name" value="RlmM_THUMP-like"/>
</dbReference>
<dbReference type="InterPro" id="IPR002877">
    <property type="entry name" value="RNA_MeTrfase_FtsJ_dom"/>
</dbReference>
<dbReference type="InterPro" id="IPR011224">
    <property type="entry name" value="rRNA_MeTrfase_M"/>
</dbReference>
<dbReference type="InterPro" id="IPR029063">
    <property type="entry name" value="SAM-dependent_MTases_sf"/>
</dbReference>
<dbReference type="NCBIfam" id="NF008734">
    <property type="entry name" value="PRK11760.1"/>
    <property type="match status" value="1"/>
</dbReference>
<dbReference type="PANTHER" id="PTHR37524">
    <property type="entry name" value="RIBOSOMAL RNA LARGE SUBUNIT METHYLTRANSFERASE M"/>
    <property type="match status" value="1"/>
</dbReference>
<dbReference type="PANTHER" id="PTHR37524:SF2">
    <property type="entry name" value="RIBOSOMAL RNA METHYLTRANSFERASE FTSJ DOMAIN-CONTAINING PROTEIN"/>
    <property type="match status" value="1"/>
</dbReference>
<dbReference type="Pfam" id="PF01728">
    <property type="entry name" value="FtsJ"/>
    <property type="match status" value="1"/>
</dbReference>
<dbReference type="Pfam" id="PF18125">
    <property type="entry name" value="RlmM_FDX"/>
    <property type="match status" value="1"/>
</dbReference>
<dbReference type="Pfam" id="PF21239">
    <property type="entry name" value="RLMM_N"/>
    <property type="match status" value="1"/>
</dbReference>
<dbReference type="PIRSF" id="PIRSF028774">
    <property type="entry name" value="UCP028774"/>
    <property type="match status" value="1"/>
</dbReference>
<dbReference type="SUPFAM" id="SSF53335">
    <property type="entry name" value="S-adenosyl-L-methionine-dependent methyltransferases"/>
    <property type="match status" value="1"/>
</dbReference>